<keyword id="KW-0963">Cytoplasm</keyword>
<keyword id="KW-0597">Phosphoprotein</keyword>
<keyword id="KW-1185">Reference proteome</keyword>
<proteinExistence type="evidence at transcript level"/>
<accession>A5PJP1</accession>
<feature type="chain" id="PRO_0000342164" description="Biogenesis of lysosome-related organelles complex 1 subunit 3">
    <location>
        <begin position="1"/>
        <end position="200"/>
    </location>
</feature>
<feature type="region of interest" description="Disordered" evidence="3">
    <location>
        <begin position="1"/>
        <end position="81"/>
    </location>
</feature>
<feature type="compositionally biased region" description="Basic residues" evidence="3">
    <location>
        <begin position="1"/>
        <end position="11"/>
    </location>
</feature>
<feature type="compositionally biased region" description="Low complexity" evidence="3">
    <location>
        <begin position="41"/>
        <end position="55"/>
    </location>
</feature>
<feature type="modified residue" description="Phosphothreonine" evidence="2">
    <location>
        <position position="63"/>
    </location>
</feature>
<feature type="modified residue" description="Phosphoserine" evidence="2">
    <location>
        <position position="65"/>
    </location>
</feature>
<comment type="function">
    <text evidence="1">Component of the BLOC-1 complex, a complex that is required for normal biogenesis of lysosome-related organelles (LRO), such as platelet dense granules and melanosomes. In concert with the AP-3 complex, the BLOC-1 complex is required to target membrane protein cargos into vesicles assembled at cell bodies for delivery into neurites and nerve terminals. The BLOC-1 complex, in association with SNARE proteins, is also proposed to be involved in neurite extension. Plays a role in intracellular vesicle trafficking (By similarity).</text>
</comment>
<comment type="subunit">
    <text evidence="1">Component of the biogenesis of lysosome-related organelles complex 1 (BLOC-1) composed of BLOC1S1, BLOC1S2, BLOC1S3, BLOC1S4, BLOC1S5, BLOC1S6, DTNBP1/BLOC1S7 and SNAPIN/BLOC1S8. Octamer composed of one copy each BLOC1S1, BLOC1S2, BLOC1S3, BLOC1S4, BLOC1S5, BLOC1S6, DTNBP1/BLOC1S7 and SNAPIN/BLOC1S8. The BLOC-1 complex associates with the AP-3 protein complex and membrane protein cargos. Interacts directly with BLOC1S2. Interacts with BLOC1S4, BLOC1S5 and BLOC1S6 (By similarity).</text>
</comment>
<comment type="subcellular location">
    <subcellularLocation>
        <location evidence="1">Cytoplasm</location>
    </subcellularLocation>
</comment>
<comment type="PTM">
    <text evidence="1">Phosphorylated.</text>
</comment>
<comment type="similarity">
    <text evidence="4">Belongs to the BLOC1S3 family.</text>
</comment>
<sequence length="200" mass="21058">MESQSRRRRPLRRPETLVQGEAAESDSDLSASSSEEEELYLGPSGPTRGRPTGLRVAGEAAETDSDPEPEPKAAPRDLPPLVVQRETAGEAWAEEEAPAPAPARSLLQLRLAESQARLDHDVAAAVSGVYRRAGRDVAALAGRLAAAQAAGLAAAHSVRLARGDLCALAERLDIVASCRLLPDIRGVPGTEPEQDPGPRA</sequence>
<gene>
    <name type="primary">BLOC1S3</name>
</gene>
<reference key="1">
    <citation type="submission" date="2007-06" db="EMBL/GenBank/DDBJ databases">
        <authorList>
            <consortium name="NIH - Mammalian Gene Collection (MGC) project"/>
        </authorList>
    </citation>
    <scope>NUCLEOTIDE SEQUENCE [LARGE SCALE MRNA]</scope>
    <source>
        <strain>Hereford</strain>
        <tissue>Hypothalamus</tissue>
    </source>
</reference>
<dbReference type="EMBL" id="BC142188">
    <property type="protein sequence ID" value="AAI42189.1"/>
    <property type="molecule type" value="mRNA"/>
</dbReference>
<dbReference type="RefSeq" id="NP_001092556.1">
    <property type="nucleotide sequence ID" value="NM_001099086.1"/>
</dbReference>
<dbReference type="RefSeq" id="XP_003583487.1">
    <property type="nucleotide sequence ID" value="XM_003583439.4"/>
</dbReference>
<dbReference type="RefSeq" id="XP_003587321.1">
    <property type="nucleotide sequence ID" value="XM_003587273.4"/>
</dbReference>
<dbReference type="RefSeq" id="XP_059733058.1">
    <property type="nucleotide sequence ID" value="XM_059877075.1"/>
</dbReference>
<dbReference type="SMR" id="A5PJP1"/>
<dbReference type="FunCoup" id="A5PJP1">
    <property type="interactions" value="1432"/>
</dbReference>
<dbReference type="STRING" id="9913.ENSBTAP00000009293"/>
<dbReference type="PaxDb" id="9913-ENSBTAP00000009293"/>
<dbReference type="Ensembl" id="ENSBTAT00000009293.3">
    <property type="protein sequence ID" value="ENSBTAP00000009293.1"/>
    <property type="gene ID" value="ENSBTAG00000007070.3"/>
</dbReference>
<dbReference type="Ensembl" id="ENSBTAT00000090405.1">
    <property type="protein sequence ID" value="ENSBTAP00000079623.1"/>
    <property type="gene ID" value="ENSBTAG00000007070.3"/>
</dbReference>
<dbReference type="Ensembl" id="ENSBTAT00000103523.1">
    <property type="protein sequence ID" value="ENSBTAP00000096050.1"/>
    <property type="gene ID" value="ENSBTAG00000007070.3"/>
</dbReference>
<dbReference type="Ensembl" id="ENSBTAT00000109340.1">
    <property type="protein sequence ID" value="ENSBTAP00000096339.1"/>
    <property type="gene ID" value="ENSBTAG00000007070.3"/>
</dbReference>
<dbReference type="Ensembl" id="ENSBTAT00000126637.1">
    <property type="protein sequence ID" value="ENSBTAP00000087783.1"/>
    <property type="gene ID" value="ENSBTAG00000007070.3"/>
</dbReference>
<dbReference type="GeneID" id="132342079"/>
<dbReference type="KEGG" id="bta:538539"/>
<dbReference type="VEuPathDB" id="HostDB:ENSBTAG00000007070"/>
<dbReference type="VGNC" id="VGNC:52182">
    <property type="gene designation" value="BLOC1S3"/>
</dbReference>
<dbReference type="eggNOG" id="ENOG502RZCG">
    <property type="taxonomic scope" value="Eukaryota"/>
</dbReference>
<dbReference type="GeneTree" id="ENSGT00390000008756"/>
<dbReference type="HOGENOM" id="CLU_116012_0_0_1"/>
<dbReference type="InParanoid" id="A5PJP1"/>
<dbReference type="OMA" id="RDHPDMH"/>
<dbReference type="OrthoDB" id="5984572at2759"/>
<dbReference type="TreeFam" id="TF336303"/>
<dbReference type="Reactome" id="R-BTA-432722">
    <property type="pathway name" value="Golgi Associated Vesicle Biogenesis"/>
</dbReference>
<dbReference type="Proteomes" id="UP000009136">
    <property type="component" value="Chromosome 18"/>
</dbReference>
<dbReference type="Bgee" id="ENSBTAG00000007070">
    <property type="expression patterns" value="Expressed in retina and 102 other cell types or tissues"/>
</dbReference>
<dbReference type="GO" id="GO:1904115">
    <property type="term" value="C:axon cytoplasm"/>
    <property type="evidence" value="ECO:0007669"/>
    <property type="project" value="GOC"/>
</dbReference>
<dbReference type="GO" id="GO:0031083">
    <property type="term" value="C:BLOC-1 complex"/>
    <property type="evidence" value="ECO:0000250"/>
    <property type="project" value="UniProtKB"/>
</dbReference>
<dbReference type="GO" id="GO:0005829">
    <property type="term" value="C:cytosol"/>
    <property type="evidence" value="ECO:0007669"/>
    <property type="project" value="Ensembl"/>
</dbReference>
<dbReference type="GO" id="GO:0030133">
    <property type="term" value="C:transport vesicle"/>
    <property type="evidence" value="ECO:0000250"/>
    <property type="project" value="UniProtKB"/>
</dbReference>
<dbReference type="GO" id="GO:0008320">
    <property type="term" value="F:protein transmembrane transporter activity"/>
    <property type="evidence" value="ECO:0007669"/>
    <property type="project" value="Ensembl"/>
</dbReference>
<dbReference type="GO" id="GO:0008089">
    <property type="term" value="P:anterograde axonal transport"/>
    <property type="evidence" value="ECO:0000250"/>
    <property type="project" value="UniProtKB"/>
</dbReference>
<dbReference type="GO" id="GO:0048490">
    <property type="term" value="P:anterograde synaptic vesicle transport"/>
    <property type="evidence" value="ECO:0000250"/>
    <property type="project" value="UniProtKB"/>
</dbReference>
<dbReference type="GO" id="GO:0035646">
    <property type="term" value="P:endosome to melanosome transport"/>
    <property type="evidence" value="ECO:0000250"/>
    <property type="project" value="UniProtKB"/>
</dbReference>
<dbReference type="GO" id="GO:0001654">
    <property type="term" value="P:eye development"/>
    <property type="evidence" value="ECO:0007669"/>
    <property type="project" value="Ensembl"/>
</dbReference>
<dbReference type="GO" id="GO:0032438">
    <property type="term" value="P:melanosome organization"/>
    <property type="evidence" value="ECO:0007669"/>
    <property type="project" value="Ensembl"/>
</dbReference>
<dbReference type="GO" id="GO:0032402">
    <property type="term" value="P:melanosome transport"/>
    <property type="evidence" value="ECO:0000250"/>
    <property type="project" value="UniProtKB"/>
</dbReference>
<dbReference type="GO" id="GO:0031175">
    <property type="term" value="P:neuron projection development"/>
    <property type="evidence" value="ECO:0000250"/>
    <property type="project" value="UniProtKB"/>
</dbReference>
<dbReference type="GO" id="GO:0030168">
    <property type="term" value="P:platelet activation"/>
    <property type="evidence" value="ECO:0007669"/>
    <property type="project" value="Ensembl"/>
</dbReference>
<dbReference type="GO" id="GO:0060155">
    <property type="term" value="P:platelet dense granule organization"/>
    <property type="evidence" value="ECO:0007669"/>
    <property type="project" value="Ensembl"/>
</dbReference>
<dbReference type="GO" id="GO:0032816">
    <property type="term" value="P:positive regulation of natural killer cell activation"/>
    <property type="evidence" value="ECO:0007669"/>
    <property type="project" value="Ensembl"/>
</dbReference>
<dbReference type="GO" id="GO:0009410">
    <property type="term" value="P:response to xenobiotic stimulus"/>
    <property type="evidence" value="ECO:0007669"/>
    <property type="project" value="Ensembl"/>
</dbReference>
<dbReference type="GO" id="GO:0033299">
    <property type="term" value="P:secretion of lysosomal enzymes"/>
    <property type="evidence" value="ECO:0007669"/>
    <property type="project" value="Ensembl"/>
</dbReference>
<dbReference type="InterPro" id="IPR017245">
    <property type="entry name" value="BLOC-1_complex_su-3"/>
</dbReference>
<dbReference type="PANTHER" id="PTHR31974">
    <property type="entry name" value="BIOGENESIS OF LYSOSOME-RELATED ORGANELLES COMPLEX 1 SUBUNIT 3"/>
    <property type="match status" value="1"/>
</dbReference>
<dbReference type="PANTHER" id="PTHR31974:SF2">
    <property type="entry name" value="BIOGENESIS OF LYSOSOME-RELATED ORGANELLES COMPLEX 1 SUBUNIT 3"/>
    <property type="match status" value="1"/>
</dbReference>
<dbReference type="Pfam" id="PF15753">
    <property type="entry name" value="BLOC1S3"/>
    <property type="match status" value="1"/>
</dbReference>
<dbReference type="PIRSF" id="PIRSF037630">
    <property type="entry name" value="BLOC-1_complex_subunit_3"/>
    <property type="match status" value="1"/>
</dbReference>
<protein>
    <recommendedName>
        <fullName>Biogenesis of lysosome-related organelles complex 1 subunit 3</fullName>
        <shortName>BLOC-1 subunit 3</shortName>
    </recommendedName>
</protein>
<evidence type="ECO:0000250" key="1"/>
<evidence type="ECO:0000250" key="2">
    <source>
        <dbReference type="UniProtKB" id="Q6QNY0"/>
    </source>
</evidence>
<evidence type="ECO:0000256" key="3">
    <source>
        <dbReference type="SAM" id="MobiDB-lite"/>
    </source>
</evidence>
<evidence type="ECO:0000305" key="4"/>
<organism>
    <name type="scientific">Bos taurus</name>
    <name type="common">Bovine</name>
    <dbReference type="NCBI Taxonomy" id="9913"/>
    <lineage>
        <taxon>Eukaryota</taxon>
        <taxon>Metazoa</taxon>
        <taxon>Chordata</taxon>
        <taxon>Craniata</taxon>
        <taxon>Vertebrata</taxon>
        <taxon>Euteleostomi</taxon>
        <taxon>Mammalia</taxon>
        <taxon>Eutheria</taxon>
        <taxon>Laurasiatheria</taxon>
        <taxon>Artiodactyla</taxon>
        <taxon>Ruminantia</taxon>
        <taxon>Pecora</taxon>
        <taxon>Bovidae</taxon>
        <taxon>Bovinae</taxon>
        <taxon>Bos</taxon>
    </lineage>
</organism>
<name>BL1S3_BOVIN</name>